<keyword id="KW-0067">ATP-binding</keyword>
<keyword id="KW-0378">Hydrolase</keyword>
<keyword id="KW-0547">Nucleotide-binding</keyword>
<keyword id="KW-1185">Reference proteome</keyword>
<sequence>MTTIDLNSDLGESYGSWVMGNDVAVLDLVSSANIACGFHAGDATVLFKTVRAAHARHVRIGAHIGYNDIAGFGRRNLDIAHDDLVAETIYQIGAIQAAAKASGAVVEYVKPHGALYNTIAVDEAQAAAVIEGIKLVNPELSLMALAGSQIVEQARAVGLQVEQETFADRAYTADGQLVSRKLPGAVLHDPETAARQALAFATGQPITAITGESVLVDANSICVHGDNPQALALVEKIVTTLAAHEVQVSHAR</sequence>
<comment type="function">
    <text evidence="1">Catalyzes the cleavage of 5-oxoproline to form L-glutamate coupled to the hydrolysis of ATP to ADP and inorganic phosphate.</text>
</comment>
<comment type="catalytic activity">
    <reaction evidence="1">
        <text>5-oxo-L-proline + ATP + 2 H2O = L-glutamate + ADP + phosphate + H(+)</text>
        <dbReference type="Rhea" id="RHEA:10348"/>
        <dbReference type="ChEBI" id="CHEBI:15377"/>
        <dbReference type="ChEBI" id="CHEBI:15378"/>
        <dbReference type="ChEBI" id="CHEBI:29985"/>
        <dbReference type="ChEBI" id="CHEBI:30616"/>
        <dbReference type="ChEBI" id="CHEBI:43474"/>
        <dbReference type="ChEBI" id="CHEBI:58402"/>
        <dbReference type="ChEBI" id="CHEBI:456216"/>
        <dbReference type="EC" id="3.5.2.9"/>
    </reaction>
</comment>
<comment type="subunit">
    <text evidence="1">Forms a complex composed of PxpA, PxpB and PxpC.</text>
</comment>
<comment type="similarity">
    <text evidence="1">Belongs to the LamB/PxpA family.</text>
</comment>
<evidence type="ECO:0000255" key="1">
    <source>
        <dbReference type="HAMAP-Rule" id="MF_00691"/>
    </source>
</evidence>
<dbReference type="EC" id="3.5.2.9" evidence="1"/>
<dbReference type="EMBL" id="BA000036">
    <property type="protein sequence ID" value="BAB98397.1"/>
    <property type="molecule type" value="Genomic_DNA"/>
</dbReference>
<dbReference type="EMBL" id="BX927151">
    <property type="protein sequence ID" value="CAF19708.1"/>
    <property type="molecule type" value="Genomic_DNA"/>
</dbReference>
<dbReference type="RefSeq" id="NP_600229.1">
    <property type="nucleotide sequence ID" value="NC_003450.3"/>
</dbReference>
<dbReference type="RefSeq" id="WP_011014041.1">
    <property type="nucleotide sequence ID" value="NC_006958.1"/>
</dbReference>
<dbReference type="SMR" id="Q8NRP4"/>
<dbReference type="STRING" id="196627.cg1141"/>
<dbReference type="KEGG" id="cgb:cg1141"/>
<dbReference type="KEGG" id="cgl:Cgl1004"/>
<dbReference type="PATRIC" id="fig|196627.13.peg.986"/>
<dbReference type="eggNOG" id="COG1540">
    <property type="taxonomic scope" value="Bacteria"/>
</dbReference>
<dbReference type="HOGENOM" id="CLU_069535_0_0_11"/>
<dbReference type="OrthoDB" id="9773478at2"/>
<dbReference type="BioCyc" id="CORYNE:G18NG-10576-MONOMER"/>
<dbReference type="Proteomes" id="UP000000582">
    <property type="component" value="Chromosome"/>
</dbReference>
<dbReference type="Proteomes" id="UP000001009">
    <property type="component" value="Chromosome"/>
</dbReference>
<dbReference type="GO" id="GO:0017168">
    <property type="term" value="F:5-oxoprolinase (ATP-hydrolyzing) activity"/>
    <property type="evidence" value="ECO:0007669"/>
    <property type="project" value="UniProtKB-UniRule"/>
</dbReference>
<dbReference type="GO" id="GO:0005524">
    <property type="term" value="F:ATP binding"/>
    <property type="evidence" value="ECO:0007669"/>
    <property type="project" value="UniProtKB-UniRule"/>
</dbReference>
<dbReference type="GO" id="GO:0005975">
    <property type="term" value="P:carbohydrate metabolic process"/>
    <property type="evidence" value="ECO:0007669"/>
    <property type="project" value="InterPro"/>
</dbReference>
<dbReference type="CDD" id="cd10787">
    <property type="entry name" value="LamB_YcsF_like"/>
    <property type="match status" value="1"/>
</dbReference>
<dbReference type="Gene3D" id="3.20.20.370">
    <property type="entry name" value="Glycoside hydrolase/deacetylase"/>
    <property type="match status" value="1"/>
</dbReference>
<dbReference type="HAMAP" id="MF_00691">
    <property type="entry name" value="PxpA"/>
    <property type="match status" value="1"/>
</dbReference>
<dbReference type="InterPro" id="IPR011330">
    <property type="entry name" value="Glyco_hydro/deAcase_b/a-brl"/>
</dbReference>
<dbReference type="InterPro" id="IPR005501">
    <property type="entry name" value="LamB/YcsF/PxpA-like"/>
</dbReference>
<dbReference type="NCBIfam" id="NF003814">
    <property type="entry name" value="PRK05406.1-3"/>
    <property type="match status" value="1"/>
</dbReference>
<dbReference type="NCBIfam" id="NF003816">
    <property type="entry name" value="PRK05406.1-5"/>
    <property type="match status" value="1"/>
</dbReference>
<dbReference type="PANTHER" id="PTHR30292:SF0">
    <property type="entry name" value="5-OXOPROLINASE SUBUNIT A"/>
    <property type="match status" value="1"/>
</dbReference>
<dbReference type="PANTHER" id="PTHR30292">
    <property type="entry name" value="UNCHARACTERIZED PROTEIN YBGL-RELATED"/>
    <property type="match status" value="1"/>
</dbReference>
<dbReference type="Pfam" id="PF03746">
    <property type="entry name" value="LamB_YcsF"/>
    <property type="match status" value="1"/>
</dbReference>
<dbReference type="SUPFAM" id="SSF88713">
    <property type="entry name" value="Glycoside hydrolase/deacetylase"/>
    <property type="match status" value="1"/>
</dbReference>
<proteinExistence type="inferred from homology"/>
<organism>
    <name type="scientific">Corynebacterium glutamicum (strain ATCC 13032 / DSM 20300 / JCM 1318 / BCRC 11384 / CCUG 27702 / LMG 3730 / NBRC 12168 / NCIMB 10025 / NRRL B-2784 / 534)</name>
    <dbReference type="NCBI Taxonomy" id="196627"/>
    <lineage>
        <taxon>Bacteria</taxon>
        <taxon>Bacillati</taxon>
        <taxon>Actinomycetota</taxon>
        <taxon>Actinomycetes</taxon>
        <taxon>Mycobacteriales</taxon>
        <taxon>Corynebacteriaceae</taxon>
        <taxon>Corynebacterium</taxon>
    </lineage>
</organism>
<protein>
    <recommendedName>
        <fullName evidence="1">5-oxoprolinase subunit A</fullName>
        <shortName evidence="1">5-OPase subunit A</shortName>
        <ecNumber evidence="1">3.5.2.9</ecNumber>
    </recommendedName>
    <alternativeName>
        <fullName evidence="1">5-oxoprolinase (ATP-hydrolyzing) subunit A</fullName>
    </alternativeName>
</protein>
<feature type="chain" id="PRO_0000185004" description="5-oxoprolinase subunit A">
    <location>
        <begin position="1"/>
        <end position="252"/>
    </location>
</feature>
<reference key="1">
    <citation type="journal article" date="2003" name="Appl. Microbiol. Biotechnol.">
        <title>The Corynebacterium glutamicum genome: features and impacts on biotechnological processes.</title>
        <authorList>
            <person name="Ikeda M."/>
            <person name="Nakagawa S."/>
        </authorList>
    </citation>
    <scope>NUCLEOTIDE SEQUENCE [LARGE SCALE GENOMIC DNA]</scope>
    <source>
        <strain>ATCC 13032 / DSM 20300 / JCM 1318 / BCRC 11384 / CCUG 27702 / LMG 3730 / NBRC 12168 / NCIMB 10025 / NRRL B-2784 / 534</strain>
    </source>
</reference>
<reference key="2">
    <citation type="journal article" date="2003" name="J. Biotechnol.">
        <title>The complete Corynebacterium glutamicum ATCC 13032 genome sequence and its impact on the production of L-aspartate-derived amino acids and vitamins.</title>
        <authorList>
            <person name="Kalinowski J."/>
            <person name="Bathe B."/>
            <person name="Bartels D."/>
            <person name="Bischoff N."/>
            <person name="Bott M."/>
            <person name="Burkovski A."/>
            <person name="Dusch N."/>
            <person name="Eggeling L."/>
            <person name="Eikmanns B.J."/>
            <person name="Gaigalat L."/>
            <person name="Goesmann A."/>
            <person name="Hartmann M."/>
            <person name="Huthmacher K."/>
            <person name="Kraemer R."/>
            <person name="Linke B."/>
            <person name="McHardy A.C."/>
            <person name="Meyer F."/>
            <person name="Moeckel B."/>
            <person name="Pfefferle W."/>
            <person name="Puehler A."/>
            <person name="Rey D.A."/>
            <person name="Rueckert C."/>
            <person name="Rupp O."/>
            <person name="Sahm H."/>
            <person name="Wendisch V.F."/>
            <person name="Wiegraebe I."/>
            <person name="Tauch A."/>
        </authorList>
    </citation>
    <scope>NUCLEOTIDE SEQUENCE [LARGE SCALE GENOMIC DNA]</scope>
    <source>
        <strain>ATCC 13032 / DSM 20300 / JCM 1318 / BCRC 11384 / CCUG 27702 / LMG 3730 / NBRC 12168 / NCIMB 10025 / NRRL B-2784 / 534</strain>
    </source>
</reference>
<accession>Q8NRP4</accession>
<name>PXPA_CORGL</name>
<gene>
    <name evidence="1" type="primary">pxpA</name>
    <name type="ordered locus">Cgl1004</name>
    <name type="ordered locus">cg1141</name>
</gene>